<evidence type="ECO:0000255" key="1">
    <source>
        <dbReference type="HAMAP-Rule" id="MF_01321"/>
    </source>
</evidence>
<evidence type="ECO:0000256" key="2">
    <source>
        <dbReference type="SAM" id="MobiDB-lite"/>
    </source>
</evidence>
<name>RPOB_SYNS3</name>
<sequence length="1097" mass="122688">MSSSAIQVAKTVTYLPDLVEVQRASFKWFLDKGLIEELESFSPITDYTGKLELHFVGSEYRLKRPRHDVEEAKRRDATFASQMYVTCRLVNKETGEIKEQEVFIGELPLMTERGTFIINGAERVIVNQIVRSPGVYFKDEQDKNGRRTYNASVIPNRGAWLKFETDKNDLLHVRVDKTRKINAHVLMRAMGLSDNDVVDKLRHPEYYKKSIEAANDEGISSEDQALLELYKKLRPGEPPSVSGGQQLLQTRFFDPKRYDLGRVGRYKINKKLRLTIPDSVRTLTHEDVLSTLDYLINLELDVGGASLDDIDHLGNRRVRSVGELLQNQVRVGLNRLERIIKERMTVGETDSLTPAQLVNPKPLVAAIKEFFGSSQLSQFMDQTNPLAELTHKRRISALGPGGLTRERAGFAVRDIHPSHYGRLCPIETPEGPNAGLINSLATHARVNEYGFIETPFWRVENGVVQKSGDPIYLSADLEDECRVAPGDVATDADGQILAELIPVRYRQDFEKVPPEQVDYVQLSPVQVISVATSLIPFLEHDDANRALMGSNMQRQAVPLLRPERPLVGTGLETQVARDSGMVPISRVNGTVTFVDATAIVVRDEEGYDHTHFLQKYQRSNQDTCLNQRPIVRQGDPVIIGQVLADGSACEGGEIALGQNVLIAYMPWEGYNYEDAILVSERLVNDDLYTSVHIEKYEIEARQTKLGPEEITREIPNVAEESLGNLDEMGIIRIGAFVESGDILVGKVTPKGESDQPPEEKLLRAIFGEKARDVRDNSLRVPSTERGRVVDVRIYTREQGDELPPGANMVVRVYVAQRRKIQVGDKMAGRHGNKGIISRILPREDMPYLPDGTPVDICLNPLGVPSRMNVGQVFELLMGWAAANLDCRVKIVPFDEMYGPEKSQQTVQAYLKEAASQPGKDWIYNPEDPGKLLLRDGRTGEPFDQPVAVGYSHFLKLVHLVDDKIHARSTGPYSLVTQQPLGGKAQQGGQRLGEMEVWALEAYGAAYTLQELLTVKSDDMQGRNEALNAIVKGKPIPRPGTPESFKVLMRELQSLGLDIAVFTDEGKEVDLMQDVNPRRSTPSRPTYESLGVADYDED</sequence>
<protein>
    <recommendedName>
        <fullName evidence="1">DNA-directed RNA polymerase subunit beta</fullName>
        <shortName evidence="1">RNAP subunit beta</shortName>
        <ecNumber evidence="1">2.7.7.6</ecNumber>
    </recommendedName>
    <alternativeName>
        <fullName evidence="1">RNA polymerase subunit beta</fullName>
    </alternativeName>
    <alternativeName>
        <fullName evidence="1">Transcriptase subunit beta</fullName>
    </alternativeName>
</protein>
<keyword id="KW-0240">DNA-directed RNA polymerase</keyword>
<keyword id="KW-0548">Nucleotidyltransferase</keyword>
<keyword id="KW-1185">Reference proteome</keyword>
<keyword id="KW-0804">Transcription</keyword>
<keyword id="KW-0808">Transferase</keyword>
<proteinExistence type="inferred from homology"/>
<comment type="function">
    <text evidence="1">DNA-dependent RNA polymerase catalyzes the transcription of DNA into RNA using the four ribonucleoside triphosphates as substrates.</text>
</comment>
<comment type="catalytic activity">
    <reaction evidence="1">
        <text>RNA(n) + a ribonucleoside 5'-triphosphate = RNA(n+1) + diphosphate</text>
        <dbReference type="Rhea" id="RHEA:21248"/>
        <dbReference type="Rhea" id="RHEA-COMP:14527"/>
        <dbReference type="Rhea" id="RHEA-COMP:17342"/>
        <dbReference type="ChEBI" id="CHEBI:33019"/>
        <dbReference type="ChEBI" id="CHEBI:61557"/>
        <dbReference type="ChEBI" id="CHEBI:140395"/>
        <dbReference type="EC" id="2.7.7.6"/>
    </reaction>
</comment>
<comment type="subunit">
    <text evidence="1">In cyanobacteria the RNAP catalytic core is composed of 2 alpha, 1 beta, 1 beta', 1 gamma and 1 omega subunit. When a sigma factor is associated with the core the holoenzyme is formed, which can initiate transcription.</text>
</comment>
<comment type="similarity">
    <text evidence="1">Belongs to the RNA polymerase beta chain family.</text>
</comment>
<gene>
    <name evidence="1" type="primary">rpoB</name>
    <name type="ordered locus">sync_2358</name>
</gene>
<dbReference type="EC" id="2.7.7.6" evidence="1"/>
<dbReference type="EMBL" id="CP000435">
    <property type="protein sequence ID" value="ABI46057.1"/>
    <property type="molecule type" value="Genomic_DNA"/>
</dbReference>
<dbReference type="RefSeq" id="WP_011620265.1">
    <property type="nucleotide sequence ID" value="NC_008319.1"/>
</dbReference>
<dbReference type="SMR" id="Q0I7L7"/>
<dbReference type="STRING" id="64471.sync_2358"/>
<dbReference type="KEGG" id="syg:sync_2358"/>
<dbReference type="eggNOG" id="COG0085">
    <property type="taxonomic scope" value="Bacteria"/>
</dbReference>
<dbReference type="HOGENOM" id="CLU_000524_4_1_3"/>
<dbReference type="OrthoDB" id="9803954at2"/>
<dbReference type="Proteomes" id="UP000001961">
    <property type="component" value="Chromosome"/>
</dbReference>
<dbReference type="GO" id="GO:0000428">
    <property type="term" value="C:DNA-directed RNA polymerase complex"/>
    <property type="evidence" value="ECO:0007669"/>
    <property type="project" value="UniProtKB-KW"/>
</dbReference>
<dbReference type="GO" id="GO:0003677">
    <property type="term" value="F:DNA binding"/>
    <property type="evidence" value="ECO:0007669"/>
    <property type="project" value="UniProtKB-UniRule"/>
</dbReference>
<dbReference type="GO" id="GO:0003899">
    <property type="term" value="F:DNA-directed RNA polymerase activity"/>
    <property type="evidence" value="ECO:0007669"/>
    <property type="project" value="UniProtKB-UniRule"/>
</dbReference>
<dbReference type="GO" id="GO:0032549">
    <property type="term" value="F:ribonucleoside binding"/>
    <property type="evidence" value="ECO:0007669"/>
    <property type="project" value="InterPro"/>
</dbReference>
<dbReference type="GO" id="GO:0006351">
    <property type="term" value="P:DNA-templated transcription"/>
    <property type="evidence" value="ECO:0007669"/>
    <property type="project" value="UniProtKB-UniRule"/>
</dbReference>
<dbReference type="CDD" id="cd00653">
    <property type="entry name" value="RNA_pol_B_RPB2"/>
    <property type="match status" value="1"/>
</dbReference>
<dbReference type="FunFam" id="3.90.1800.10:FF:000001">
    <property type="entry name" value="DNA-directed RNA polymerase subunit beta"/>
    <property type="match status" value="1"/>
</dbReference>
<dbReference type="Gene3D" id="2.40.50.100">
    <property type="match status" value="1"/>
</dbReference>
<dbReference type="Gene3D" id="2.40.50.150">
    <property type="match status" value="1"/>
</dbReference>
<dbReference type="Gene3D" id="3.90.1100.10">
    <property type="match status" value="1"/>
</dbReference>
<dbReference type="Gene3D" id="2.30.150.10">
    <property type="entry name" value="DNA-directed RNA polymerase, beta subunit, external 1 domain"/>
    <property type="match status" value="1"/>
</dbReference>
<dbReference type="Gene3D" id="2.40.270.10">
    <property type="entry name" value="DNA-directed RNA polymerase, subunit 2, domain 6"/>
    <property type="match status" value="1"/>
</dbReference>
<dbReference type="Gene3D" id="3.90.1800.10">
    <property type="entry name" value="RNA polymerase alpha subunit dimerisation domain"/>
    <property type="match status" value="1"/>
</dbReference>
<dbReference type="Gene3D" id="3.90.1110.10">
    <property type="entry name" value="RNA polymerase Rpb2, domain 2"/>
    <property type="match status" value="1"/>
</dbReference>
<dbReference type="HAMAP" id="MF_01321">
    <property type="entry name" value="RNApol_bact_RpoB"/>
    <property type="match status" value="1"/>
</dbReference>
<dbReference type="InterPro" id="IPR042107">
    <property type="entry name" value="DNA-dir_RNA_pol_bsu_ext_1_sf"/>
</dbReference>
<dbReference type="InterPro" id="IPR019462">
    <property type="entry name" value="DNA-dir_RNA_pol_bsu_external_1"/>
</dbReference>
<dbReference type="InterPro" id="IPR015712">
    <property type="entry name" value="DNA-dir_RNA_pol_su2"/>
</dbReference>
<dbReference type="InterPro" id="IPR007120">
    <property type="entry name" value="DNA-dir_RNAP_su2_dom"/>
</dbReference>
<dbReference type="InterPro" id="IPR037033">
    <property type="entry name" value="DNA-dir_RNAP_su2_hyb_sf"/>
</dbReference>
<dbReference type="InterPro" id="IPR010243">
    <property type="entry name" value="RNA_pol_bsu_bac"/>
</dbReference>
<dbReference type="InterPro" id="IPR007121">
    <property type="entry name" value="RNA_pol_bsu_CS"/>
</dbReference>
<dbReference type="InterPro" id="IPR007644">
    <property type="entry name" value="RNA_pol_bsu_protrusion"/>
</dbReference>
<dbReference type="InterPro" id="IPR007642">
    <property type="entry name" value="RNA_pol_Rpb2_2"/>
</dbReference>
<dbReference type="InterPro" id="IPR037034">
    <property type="entry name" value="RNA_pol_Rpb2_2_sf"/>
</dbReference>
<dbReference type="InterPro" id="IPR007645">
    <property type="entry name" value="RNA_pol_Rpb2_3"/>
</dbReference>
<dbReference type="InterPro" id="IPR007641">
    <property type="entry name" value="RNA_pol_Rpb2_7"/>
</dbReference>
<dbReference type="InterPro" id="IPR014724">
    <property type="entry name" value="RNA_pol_RPB2_OB-fold"/>
</dbReference>
<dbReference type="NCBIfam" id="NF001616">
    <property type="entry name" value="PRK00405.1"/>
    <property type="match status" value="1"/>
</dbReference>
<dbReference type="NCBIfam" id="TIGR02013">
    <property type="entry name" value="rpoB"/>
    <property type="match status" value="1"/>
</dbReference>
<dbReference type="PANTHER" id="PTHR20856">
    <property type="entry name" value="DNA-DIRECTED RNA POLYMERASE I SUBUNIT 2"/>
    <property type="match status" value="1"/>
</dbReference>
<dbReference type="Pfam" id="PF04563">
    <property type="entry name" value="RNA_pol_Rpb2_1"/>
    <property type="match status" value="1"/>
</dbReference>
<dbReference type="Pfam" id="PF04561">
    <property type="entry name" value="RNA_pol_Rpb2_2"/>
    <property type="match status" value="1"/>
</dbReference>
<dbReference type="Pfam" id="PF04565">
    <property type="entry name" value="RNA_pol_Rpb2_3"/>
    <property type="match status" value="1"/>
</dbReference>
<dbReference type="Pfam" id="PF10385">
    <property type="entry name" value="RNA_pol_Rpb2_45"/>
    <property type="match status" value="1"/>
</dbReference>
<dbReference type="Pfam" id="PF00562">
    <property type="entry name" value="RNA_pol_Rpb2_6"/>
    <property type="match status" value="1"/>
</dbReference>
<dbReference type="Pfam" id="PF04560">
    <property type="entry name" value="RNA_pol_Rpb2_7"/>
    <property type="match status" value="1"/>
</dbReference>
<dbReference type="SUPFAM" id="SSF64484">
    <property type="entry name" value="beta and beta-prime subunits of DNA dependent RNA-polymerase"/>
    <property type="match status" value="1"/>
</dbReference>
<dbReference type="PROSITE" id="PS01166">
    <property type="entry name" value="RNA_POL_BETA"/>
    <property type="match status" value="1"/>
</dbReference>
<organism>
    <name type="scientific">Synechococcus sp. (strain CC9311)</name>
    <dbReference type="NCBI Taxonomy" id="64471"/>
    <lineage>
        <taxon>Bacteria</taxon>
        <taxon>Bacillati</taxon>
        <taxon>Cyanobacteriota</taxon>
        <taxon>Cyanophyceae</taxon>
        <taxon>Synechococcales</taxon>
        <taxon>Synechococcaceae</taxon>
        <taxon>Synechococcus</taxon>
    </lineage>
</organism>
<reference key="1">
    <citation type="journal article" date="2006" name="Proc. Natl. Acad. Sci. U.S.A.">
        <title>Genome sequence of Synechococcus CC9311: insights into adaptation to a coastal environment.</title>
        <authorList>
            <person name="Palenik B."/>
            <person name="Ren Q."/>
            <person name="Dupont C.L."/>
            <person name="Myers G.S."/>
            <person name="Heidelberg J.F."/>
            <person name="Badger J.H."/>
            <person name="Madupu R."/>
            <person name="Nelson W.C."/>
            <person name="Brinkac L.M."/>
            <person name="Dodson R.J."/>
            <person name="Durkin A.S."/>
            <person name="Daugherty S.C."/>
            <person name="Sullivan S.A."/>
            <person name="Khouri H."/>
            <person name="Mohamoud Y."/>
            <person name="Halpin R."/>
            <person name="Paulsen I.T."/>
        </authorList>
    </citation>
    <scope>NUCLEOTIDE SEQUENCE [LARGE SCALE GENOMIC DNA]</scope>
    <source>
        <strain>CC9311</strain>
    </source>
</reference>
<feature type="chain" id="PRO_0000300418" description="DNA-directed RNA polymerase subunit beta">
    <location>
        <begin position="1"/>
        <end position="1097"/>
    </location>
</feature>
<feature type="region of interest" description="Disordered" evidence="2">
    <location>
        <begin position="1073"/>
        <end position="1097"/>
    </location>
</feature>
<accession>Q0I7L7</accession>